<feature type="chain" id="PRO_1000215244" description="ATP synthase subunit delta">
    <location>
        <begin position="1"/>
        <end position="178"/>
    </location>
</feature>
<comment type="function">
    <text evidence="1">F(1)F(0) ATP synthase produces ATP from ADP in the presence of a proton or sodium gradient. F-type ATPases consist of two structural domains, F(1) containing the extramembraneous catalytic core and F(0) containing the membrane proton channel, linked together by a central stalk and a peripheral stalk. During catalysis, ATP synthesis in the catalytic domain of F(1) is coupled via a rotary mechanism of the central stalk subunits to proton translocation.</text>
</comment>
<comment type="function">
    <text evidence="1">This protein is part of the stalk that links CF(0) to CF(1). It either transmits conformational changes from CF(0) to CF(1) or is implicated in proton conduction.</text>
</comment>
<comment type="subunit">
    <text evidence="1">F-type ATPases have 2 components, F(1) - the catalytic core - and F(0) - the membrane proton channel. F(1) has five subunits: alpha(3), beta(3), gamma(1), delta(1), epsilon(1). F(0) has three main subunits: a(1), b(2) and c(10-14). The alpha and beta chains form an alternating ring which encloses part of the gamma chain. F(1) is attached to F(0) by a central stalk formed by the gamma and epsilon chains, while a peripheral stalk is formed by the delta and b chains.</text>
</comment>
<comment type="subcellular location">
    <subcellularLocation>
        <location evidence="1">Cell inner membrane</location>
        <topology evidence="1">Peripheral membrane protein</topology>
    </subcellularLocation>
</comment>
<comment type="similarity">
    <text evidence="1">Belongs to the ATPase delta chain family.</text>
</comment>
<organism>
    <name type="scientific">Teredinibacter turnerae (strain ATCC 39867 / T7901)</name>
    <dbReference type="NCBI Taxonomy" id="377629"/>
    <lineage>
        <taxon>Bacteria</taxon>
        <taxon>Pseudomonadati</taxon>
        <taxon>Pseudomonadota</taxon>
        <taxon>Gammaproteobacteria</taxon>
        <taxon>Cellvibrionales</taxon>
        <taxon>Cellvibrionaceae</taxon>
        <taxon>Teredinibacter</taxon>
    </lineage>
</organism>
<evidence type="ECO:0000255" key="1">
    <source>
        <dbReference type="HAMAP-Rule" id="MF_01416"/>
    </source>
</evidence>
<protein>
    <recommendedName>
        <fullName evidence="1">ATP synthase subunit delta</fullName>
    </recommendedName>
    <alternativeName>
        <fullName evidence="1">ATP synthase F(1) sector subunit delta</fullName>
    </alternativeName>
    <alternativeName>
        <fullName evidence="1">F-type ATPase subunit delta</fullName>
        <shortName evidence="1">F-ATPase subunit delta</shortName>
    </alternativeName>
</protein>
<gene>
    <name evidence="1" type="primary">atpH</name>
    <name type="ordered locus">TERTU_4719</name>
</gene>
<accession>C5BKJ8</accession>
<reference key="1">
    <citation type="journal article" date="2009" name="PLoS ONE">
        <title>The complete genome of Teredinibacter turnerae T7901: an intracellular endosymbiont of marine wood-boring bivalves (shipworms).</title>
        <authorList>
            <person name="Yang J.C."/>
            <person name="Madupu R."/>
            <person name="Durkin A.S."/>
            <person name="Ekborg N.A."/>
            <person name="Pedamallu C.S."/>
            <person name="Hostetler J.B."/>
            <person name="Radune D."/>
            <person name="Toms B.S."/>
            <person name="Henrissat B."/>
            <person name="Coutinho P.M."/>
            <person name="Schwarz S."/>
            <person name="Field L."/>
            <person name="Trindade-Silva A.E."/>
            <person name="Soares C.A.G."/>
            <person name="Elshahawi S."/>
            <person name="Hanora A."/>
            <person name="Schmidt E.W."/>
            <person name="Haygood M.G."/>
            <person name="Posfai J."/>
            <person name="Benner J."/>
            <person name="Madinger C."/>
            <person name="Nove J."/>
            <person name="Anton B."/>
            <person name="Chaudhary K."/>
            <person name="Foster J."/>
            <person name="Holman A."/>
            <person name="Kumar S."/>
            <person name="Lessard P.A."/>
            <person name="Luyten Y.A."/>
            <person name="Slatko B."/>
            <person name="Wood N."/>
            <person name="Wu B."/>
            <person name="Teplitski M."/>
            <person name="Mougous J.D."/>
            <person name="Ward N."/>
            <person name="Eisen J.A."/>
            <person name="Badger J.H."/>
            <person name="Distel D.L."/>
        </authorList>
    </citation>
    <scope>NUCLEOTIDE SEQUENCE [LARGE SCALE GENOMIC DNA]</scope>
    <source>
        <strain>ATCC 39867 / T7901</strain>
    </source>
</reference>
<dbReference type="EMBL" id="CP001614">
    <property type="protein sequence ID" value="ACR13254.1"/>
    <property type="molecule type" value="Genomic_DNA"/>
</dbReference>
<dbReference type="RefSeq" id="WP_015819367.1">
    <property type="nucleotide sequence ID" value="NC_012997.1"/>
</dbReference>
<dbReference type="SMR" id="C5BKJ8"/>
<dbReference type="STRING" id="377629.TERTU_4719"/>
<dbReference type="KEGG" id="ttu:TERTU_4719"/>
<dbReference type="eggNOG" id="COG0712">
    <property type="taxonomic scope" value="Bacteria"/>
</dbReference>
<dbReference type="HOGENOM" id="CLU_085114_3_0_6"/>
<dbReference type="OrthoDB" id="9816221at2"/>
<dbReference type="Proteomes" id="UP000009080">
    <property type="component" value="Chromosome"/>
</dbReference>
<dbReference type="GO" id="GO:0005886">
    <property type="term" value="C:plasma membrane"/>
    <property type="evidence" value="ECO:0007669"/>
    <property type="project" value="UniProtKB-SubCell"/>
</dbReference>
<dbReference type="GO" id="GO:0045259">
    <property type="term" value="C:proton-transporting ATP synthase complex"/>
    <property type="evidence" value="ECO:0007669"/>
    <property type="project" value="UniProtKB-KW"/>
</dbReference>
<dbReference type="GO" id="GO:0046933">
    <property type="term" value="F:proton-transporting ATP synthase activity, rotational mechanism"/>
    <property type="evidence" value="ECO:0007669"/>
    <property type="project" value="UniProtKB-UniRule"/>
</dbReference>
<dbReference type="Gene3D" id="1.10.520.20">
    <property type="entry name" value="N-terminal domain of the delta subunit of the F1F0-ATP synthase"/>
    <property type="match status" value="1"/>
</dbReference>
<dbReference type="HAMAP" id="MF_01416">
    <property type="entry name" value="ATP_synth_delta_bact"/>
    <property type="match status" value="1"/>
</dbReference>
<dbReference type="InterPro" id="IPR026015">
    <property type="entry name" value="ATP_synth_OSCP/delta_N_sf"/>
</dbReference>
<dbReference type="InterPro" id="IPR020781">
    <property type="entry name" value="ATPase_OSCP/d_CS"/>
</dbReference>
<dbReference type="InterPro" id="IPR000711">
    <property type="entry name" value="ATPase_OSCP/dsu"/>
</dbReference>
<dbReference type="NCBIfam" id="TIGR01145">
    <property type="entry name" value="ATP_synt_delta"/>
    <property type="match status" value="1"/>
</dbReference>
<dbReference type="NCBIfam" id="NF004402">
    <property type="entry name" value="PRK05758.2-2"/>
    <property type="match status" value="1"/>
</dbReference>
<dbReference type="PANTHER" id="PTHR11910">
    <property type="entry name" value="ATP SYNTHASE DELTA CHAIN"/>
    <property type="match status" value="1"/>
</dbReference>
<dbReference type="Pfam" id="PF00213">
    <property type="entry name" value="OSCP"/>
    <property type="match status" value="1"/>
</dbReference>
<dbReference type="PRINTS" id="PR00125">
    <property type="entry name" value="ATPASEDELTA"/>
</dbReference>
<dbReference type="SUPFAM" id="SSF47928">
    <property type="entry name" value="N-terminal domain of the delta subunit of the F1F0-ATP synthase"/>
    <property type="match status" value="1"/>
</dbReference>
<dbReference type="PROSITE" id="PS00389">
    <property type="entry name" value="ATPASE_DELTA"/>
    <property type="match status" value="1"/>
</dbReference>
<keyword id="KW-0066">ATP synthesis</keyword>
<keyword id="KW-0997">Cell inner membrane</keyword>
<keyword id="KW-1003">Cell membrane</keyword>
<keyword id="KW-0139">CF(1)</keyword>
<keyword id="KW-0375">Hydrogen ion transport</keyword>
<keyword id="KW-0406">Ion transport</keyword>
<keyword id="KW-0472">Membrane</keyword>
<keyword id="KW-1185">Reference proteome</keyword>
<keyword id="KW-0813">Transport</keyword>
<proteinExistence type="inferred from homology"/>
<sequence>MAEPITLARPYAKAAFEAARDASALQSWSDALVEAAAITRDSKVKALLSSPSLTAVQKAAAFIDLCGDTLNEAQKNFIRVLADNNRLPLFPQVSQLFELYKANQEKAVDVELQTAYDIDDAVLAKLATSLTEKLDRKVSLQTAIDPSLLGGAIIRAGDTVIDGSVRGRLAKLAETMSH</sequence>
<name>ATPD_TERTT</name>